<evidence type="ECO:0000255" key="1"/>
<evidence type="ECO:0000269" key="2">
    <source>
    </source>
</evidence>
<evidence type="ECO:0000305" key="3"/>
<evidence type="ECO:0007829" key="4">
    <source>
        <dbReference type="PDB" id="7QHM"/>
    </source>
</evidence>
<name>COX3_CORGL</name>
<accession>Q9AEL8</accession>
<accession>Q79VE7</accession>
<gene>
    <name type="primary">ctaE</name>
    <name type="ordered locus">Cgl2192</name>
    <name type="ordered locus">cg2406</name>
</gene>
<feature type="chain" id="PRO_0000183880" description="Cytochrome c oxidase subunit 3">
    <location>
        <begin position="1"/>
        <end position="205"/>
    </location>
</feature>
<feature type="transmembrane region" description="Helical" evidence="1">
    <location>
        <begin position="29"/>
        <end position="49"/>
    </location>
</feature>
<feature type="transmembrane region" description="Helical" evidence="1">
    <location>
        <begin position="72"/>
        <end position="92"/>
    </location>
</feature>
<feature type="transmembrane region" description="Helical" evidence="1">
    <location>
        <begin position="104"/>
        <end position="124"/>
    </location>
</feature>
<feature type="transmembrane region" description="Helical" evidence="1">
    <location>
        <begin position="142"/>
        <end position="162"/>
    </location>
</feature>
<feature type="transmembrane region" description="Helical" evidence="1">
    <location>
        <begin position="184"/>
        <end position="204"/>
    </location>
</feature>
<feature type="helix" evidence="4">
    <location>
        <begin position="24"/>
        <end position="56"/>
    </location>
</feature>
<feature type="helix" evidence="4">
    <location>
        <begin position="61"/>
        <end position="64"/>
    </location>
</feature>
<feature type="helix" evidence="4">
    <location>
        <begin position="69"/>
        <end position="94"/>
    </location>
</feature>
<feature type="helix" evidence="4">
    <location>
        <begin position="98"/>
        <end position="128"/>
    </location>
</feature>
<feature type="turn" evidence="4">
    <location>
        <begin position="133"/>
        <end position="135"/>
    </location>
</feature>
<feature type="helix" evidence="4">
    <location>
        <begin position="137"/>
        <end position="169"/>
    </location>
</feature>
<feature type="helix" evidence="4">
    <location>
        <begin position="174"/>
        <end position="202"/>
    </location>
</feature>
<reference key="1">
    <citation type="journal article" date="2001" name="Arch. Microbiol.">
        <title>Molecular analysis of the cytochrome bc1-aa3 branch of the Corynebacterium glutamicum respiratory chain containing an unusual diheme cytochrome c1.</title>
        <authorList>
            <person name="Niebisch A."/>
            <person name="Bott M."/>
        </authorList>
    </citation>
    <scope>NUCLEOTIDE SEQUENCE [GENOMIC DNA]</scope>
    <source>
        <strain>ATCC 13032 / DSM 20300 / JCM 1318 / BCRC 11384 / CCUG 27702 / LMG 3730 / NBRC 12168 / NCIMB 10025 / NRRL B-2784 / 534</strain>
    </source>
</reference>
<reference key="2">
    <citation type="journal article" date="2001" name="Microbiology">
        <title>Cytochrome c oxidase contains an extra charged amino acid cluster in a new type of respiratory chain in the amino acid-producing Gram-positive bacterium Corynebacterium glutamicum.</title>
        <authorList>
            <person name="Sakamoto J."/>
            <person name="Shibata T."/>
            <person name="Mine T."/>
            <person name="Miyahara R."/>
            <person name="Torigoe T."/>
            <person name="Noguchi S."/>
            <person name="Matsushita K."/>
            <person name="Sone N."/>
        </authorList>
    </citation>
    <scope>NUCLEOTIDE SEQUENCE [GENOMIC DNA]</scope>
    <scope>SUBUNIT</scope>
    <scope>MASS SPECTROMETRY</scope>
    <source>
        <strain>ATCC 13032 / DSM 20300 / JCM 1318 / BCRC 11384 / CCUG 27702 / LMG 3730 / NBRC 12168 / NCIMB 10025 / NRRL B-2784 / 534</strain>
    </source>
</reference>
<reference key="3">
    <citation type="journal article" date="2003" name="Appl. Microbiol. Biotechnol.">
        <title>The Corynebacterium glutamicum genome: features and impacts on biotechnological processes.</title>
        <authorList>
            <person name="Ikeda M."/>
            <person name="Nakagawa S."/>
        </authorList>
    </citation>
    <scope>NUCLEOTIDE SEQUENCE [LARGE SCALE GENOMIC DNA]</scope>
    <source>
        <strain>ATCC 13032 / DSM 20300 / JCM 1318 / BCRC 11384 / CCUG 27702 / LMG 3730 / NBRC 12168 / NCIMB 10025 / NRRL B-2784 / 534</strain>
    </source>
</reference>
<reference key="4">
    <citation type="journal article" date="2003" name="J. Biotechnol.">
        <title>The complete Corynebacterium glutamicum ATCC 13032 genome sequence and its impact on the production of L-aspartate-derived amino acids and vitamins.</title>
        <authorList>
            <person name="Kalinowski J."/>
            <person name="Bathe B."/>
            <person name="Bartels D."/>
            <person name="Bischoff N."/>
            <person name="Bott M."/>
            <person name="Burkovski A."/>
            <person name="Dusch N."/>
            <person name="Eggeling L."/>
            <person name="Eikmanns B.J."/>
            <person name="Gaigalat L."/>
            <person name="Goesmann A."/>
            <person name="Hartmann M."/>
            <person name="Huthmacher K."/>
            <person name="Kraemer R."/>
            <person name="Linke B."/>
            <person name="McHardy A.C."/>
            <person name="Meyer F."/>
            <person name="Moeckel B."/>
            <person name="Pfefferle W."/>
            <person name="Puehler A."/>
            <person name="Rey D.A."/>
            <person name="Rueckert C."/>
            <person name="Rupp O."/>
            <person name="Sahm H."/>
            <person name="Wendisch V.F."/>
            <person name="Wiegraebe I."/>
            <person name="Tauch A."/>
        </authorList>
    </citation>
    <scope>NUCLEOTIDE SEQUENCE [LARGE SCALE GENOMIC DNA]</scope>
    <source>
        <strain>ATCC 13032 / DSM 20300 / JCM 1318 / BCRC 11384 / CCUG 27702 / LMG 3730 / NBRC 12168 / NCIMB 10025 / NRRL B-2784 / 534</strain>
    </source>
</reference>
<reference key="5">
    <citation type="journal article" date="2003" name="J. Biol. Chem.">
        <title>Purification of a cytochrome bc1-aa3 supercomplex with quinol oxidase activity from Corynebacterium glutamicum. Identification of a fourth subunity of cytochrome aa3 oxidase and mutational analysis of diheme cytochrome c1.</title>
        <authorList>
            <person name="Niebisch A."/>
            <person name="Bott M."/>
        </authorList>
    </citation>
    <scope>DETECTION IN A SUPERCOMPLEX WITH MENAQUINOL-CYTOCHROME C REDUCTASE (CYTOCHROME BC1)</scope>
    <source>
        <strain>ATCC 13032 / DSM 20300 / JCM 1318 / BCRC 11384 / CCUG 27702 / LMG 3730 / NBRC 12168 / NCIMB 10025 / NRRL B-2784 / 534</strain>
    </source>
</reference>
<organism>
    <name type="scientific">Corynebacterium glutamicum (strain ATCC 13032 / DSM 20300 / JCM 1318 / BCRC 11384 / CCUG 27702 / LMG 3730 / NBRC 12168 / NCIMB 10025 / NRRL B-2784 / 534)</name>
    <dbReference type="NCBI Taxonomy" id="196627"/>
    <lineage>
        <taxon>Bacteria</taxon>
        <taxon>Bacillati</taxon>
        <taxon>Actinomycetota</taxon>
        <taxon>Actinomycetes</taxon>
        <taxon>Mycobacteriales</taxon>
        <taxon>Corynebacteriaceae</taxon>
        <taxon>Corynebacterium</taxon>
    </lineage>
</organism>
<keyword id="KW-0002">3D-structure</keyword>
<keyword id="KW-1003">Cell membrane</keyword>
<keyword id="KW-0472">Membrane</keyword>
<keyword id="KW-1185">Reference proteome</keyword>
<keyword id="KW-1278">Translocase</keyword>
<keyword id="KW-0812">Transmembrane</keyword>
<keyword id="KW-1133">Transmembrane helix</keyword>
<proteinExistence type="evidence at protein level"/>
<comment type="catalytic activity">
    <reaction>
        <text>4 Fe(II)-[cytochrome c] + O2 + 8 H(+)(in) = 4 Fe(III)-[cytochrome c] + 2 H2O + 4 H(+)(out)</text>
        <dbReference type="Rhea" id="RHEA:11436"/>
        <dbReference type="Rhea" id="RHEA-COMP:10350"/>
        <dbReference type="Rhea" id="RHEA-COMP:14399"/>
        <dbReference type="ChEBI" id="CHEBI:15377"/>
        <dbReference type="ChEBI" id="CHEBI:15378"/>
        <dbReference type="ChEBI" id="CHEBI:15379"/>
        <dbReference type="ChEBI" id="CHEBI:29033"/>
        <dbReference type="ChEBI" id="CHEBI:29034"/>
        <dbReference type="EC" id="7.1.1.9"/>
    </reaction>
</comment>
<comment type="subunit">
    <text evidence="2">Associates with subunits I, II and IV to form cytochrome c oxidase. The 4 subunit cytochrome c oxidase forms a supercomplex with the menaquinol-cytochrome c reductase complex (cytochrome bc1).</text>
</comment>
<comment type="subcellular location">
    <subcellularLocation>
        <location>Cell membrane</location>
        <topology>Multi-pass membrane protein</topology>
    </subcellularLocation>
</comment>
<comment type="mass spectrometry" mass="22400.7" error="27.9" method="MALDI" evidence="2"/>
<comment type="similarity">
    <text evidence="3">Belongs to the cytochrome c oxidase subunit 3 family.</text>
</comment>
<dbReference type="EC" id="7.1.1.9"/>
<dbReference type="EMBL" id="AJ306418">
    <property type="protein sequence ID" value="CAC33825.1"/>
    <property type="molecule type" value="Genomic_DNA"/>
</dbReference>
<dbReference type="EMBL" id="BA000036">
    <property type="protein sequence ID" value="BAB99585.1"/>
    <property type="molecule type" value="Genomic_DNA"/>
</dbReference>
<dbReference type="EMBL" id="BX927154">
    <property type="protein sequence ID" value="CAF20533.1"/>
    <property type="molecule type" value="Genomic_DNA"/>
</dbReference>
<dbReference type="EMBL" id="AB052749">
    <property type="protein sequence ID" value="BAB64408.1"/>
    <property type="molecule type" value="Genomic_DNA"/>
</dbReference>
<dbReference type="RefSeq" id="NP_601396.2">
    <property type="nucleotide sequence ID" value="NC_003450.3"/>
</dbReference>
<dbReference type="RefSeq" id="WP_011014948.1">
    <property type="nucleotide sequence ID" value="NC_006958.1"/>
</dbReference>
<dbReference type="PDB" id="7Q21">
    <property type="method" value="EM"/>
    <property type="resolution" value="3.00 A"/>
    <property type="chains" value="E/e=1-205"/>
</dbReference>
<dbReference type="PDB" id="7QHM">
    <property type="method" value="EM"/>
    <property type="resolution" value="2.80 A"/>
    <property type="chains" value="F/S=1-205"/>
</dbReference>
<dbReference type="PDB" id="7QHO">
    <property type="method" value="EM"/>
    <property type="resolution" value="3.10 A"/>
    <property type="chains" value="F/S=1-205"/>
</dbReference>
<dbReference type="PDBsum" id="7Q21"/>
<dbReference type="PDBsum" id="7QHM"/>
<dbReference type="PDBsum" id="7QHO"/>
<dbReference type="EMDB" id="EMD-13777"/>
<dbReference type="EMDB" id="EMD-13976"/>
<dbReference type="EMDB" id="EMD-13977"/>
<dbReference type="SMR" id="Q9AEL8"/>
<dbReference type="STRING" id="196627.cg2406"/>
<dbReference type="TCDB" id="3.D.4.4.2">
    <property type="family name" value="the proton-translocating cytochrome oxidase (cox) superfamily"/>
</dbReference>
<dbReference type="KEGG" id="cgb:cg2406"/>
<dbReference type="KEGG" id="cgl:Cgl2192"/>
<dbReference type="PATRIC" id="fig|196627.13.peg.2129"/>
<dbReference type="eggNOG" id="COG1845">
    <property type="taxonomic scope" value="Bacteria"/>
</dbReference>
<dbReference type="HOGENOM" id="CLU_044071_1_1_11"/>
<dbReference type="OrthoDB" id="9810850at2"/>
<dbReference type="BioCyc" id="CORYNE:G18NG-11784-MONOMER"/>
<dbReference type="Proteomes" id="UP000000582">
    <property type="component" value="Chromosome"/>
</dbReference>
<dbReference type="Proteomes" id="UP000001009">
    <property type="component" value="Chromosome"/>
</dbReference>
<dbReference type="GO" id="GO:0005886">
    <property type="term" value="C:plasma membrane"/>
    <property type="evidence" value="ECO:0007669"/>
    <property type="project" value="UniProtKB-SubCell"/>
</dbReference>
<dbReference type="GO" id="GO:0004129">
    <property type="term" value="F:cytochrome-c oxidase activity"/>
    <property type="evidence" value="ECO:0007669"/>
    <property type="project" value="UniProtKB-EC"/>
</dbReference>
<dbReference type="GO" id="GO:0019646">
    <property type="term" value="P:aerobic electron transport chain"/>
    <property type="evidence" value="ECO:0007669"/>
    <property type="project" value="InterPro"/>
</dbReference>
<dbReference type="CDD" id="cd00386">
    <property type="entry name" value="Heme_Cu_Oxidase_III_like"/>
    <property type="match status" value="1"/>
</dbReference>
<dbReference type="FunFam" id="1.20.120.80:FF:000001">
    <property type="entry name" value="Cytochrome (Ubi)quinol oxidase subunit III"/>
    <property type="match status" value="1"/>
</dbReference>
<dbReference type="Gene3D" id="1.20.120.80">
    <property type="entry name" value="Cytochrome c oxidase, subunit III, four-helix bundle"/>
    <property type="match status" value="1"/>
</dbReference>
<dbReference type="InterPro" id="IPR024791">
    <property type="entry name" value="Cyt_c/ubiquinol_Oxase_su3"/>
</dbReference>
<dbReference type="InterPro" id="IPR000298">
    <property type="entry name" value="Cyt_c_oxidase-like_su3"/>
</dbReference>
<dbReference type="InterPro" id="IPR035973">
    <property type="entry name" value="Cyt_c_oxidase_su3-like_sf"/>
</dbReference>
<dbReference type="InterPro" id="IPR013833">
    <property type="entry name" value="Cyt_c_oxidase_su3_a-hlx"/>
</dbReference>
<dbReference type="PANTHER" id="PTHR11403:SF2">
    <property type="entry name" value="CYTOCHROME BO(3) UBIQUINOL OXIDASE SUBUNIT 3"/>
    <property type="match status" value="1"/>
</dbReference>
<dbReference type="PANTHER" id="PTHR11403">
    <property type="entry name" value="CYTOCHROME C OXIDASE SUBUNIT III"/>
    <property type="match status" value="1"/>
</dbReference>
<dbReference type="Pfam" id="PF00510">
    <property type="entry name" value="COX3"/>
    <property type="match status" value="1"/>
</dbReference>
<dbReference type="SUPFAM" id="SSF81452">
    <property type="entry name" value="Cytochrome c oxidase subunit III-like"/>
    <property type="match status" value="1"/>
</dbReference>
<dbReference type="PROSITE" id="PS50253">
    <property type="entry name" value="COX3"/>
    <property type="match status" value="1"/>
</dbReference>
<sequence length="205" mass="22442">MTSAVGNTGMAAPQRVAALNRPNMVSVGTIVFLSQELMFFAGLFAMYFVSRANGLANGSWGEQTDHLNVPYALLITVILVSSSVTCQFGVFAAERGDVYGLRKWFLVTIILGSIFVIGQGYEYITLVGHGLTIQSSVYGSAFFITTGFHALHVIAGVMAFVVVLMRIHKSKFTPAQATAAMVVSYYWHFVDVVWIGLFITIYFIQ</sequence>
<protein>
    <recommendedName>
        <fullName>Cytochrome c oxidase subunit 3</fullName>
        <ecNumber>7.1.1.9</ecNumber>
    </recommendedName>
    <alternativeName>
        <fullName>Cytochrome aa3 subunit 3</fullName>
    </alternativeName>
    <alternativeName>
        <fullName>Cytochrome c oxidase polypeptide III</fullName>
    </alternativeName>
</protein>